<reference key="1">
    <citation type="submission" date="2009-01" db="EMBL/GenBank/DDBJ databases">
        <title>Complete sequence of Desulfovibrio desulfuricans subsp. desulfuricans str. ATCC 27774.</title>
        <authorList>
            <consortium name="US DOE Joint Genome Institute"/>
            <person name="Lucas S."/>
            <person name="Copeland A."/>
            <person name="Lapidus A."/>
            <person name="Glavina del Rio T."/>
            <person name="Tice H."/>
            <person name="Bruce D."/>
            <person name="Goodwin L."/>
            <person name="Pitluck S."/>
            <person name="Sims D."/>
            <person name="Lu M."/>
            <person name="Kiss H."/>
            <person name="Meineke L."/>
            <person name="Brettin T."/>
            <person name="Detter J.C."/>
            <person name="Han C."/>
            <person name="Larimer F."/>
            <person name="Land M."/>
            <person name="Hauser L."/>
            <person name="Kyrpides N."/>
            <person name="Ovchinnikova G."/>
            <person name="Hazen T.C."/>
        </authorList>
    </citation>
    <scope>NUCLEOTIDE SEQUENCE [LARGE SCALE GENOMIC DNA]</scope>
    <source>
        <strain>ATCC 27774 / DSM 6949 / MB</strain>
    </source>
</reference>
<accession>B8IYH7</accession>
<protein>
    <recommendedName>
        <fullName evidence="1">Large ribosomal subunit protein uL22</fullName>
    </recommendedName>
    <alternativeName>
        <fullName evidence="2">50S ribosomal protein L22</fullName>
    </alternativeName>
</protein>
<dbReference type="EMBL" id="CP001358">
    <property type="protein sequence ID" value="ACL48573.1"/>
    <property type="molecule type" value="Genomic_DNA"/>
</dbReference>
<dbReference type="SMR" id="B8IYH7"/>
<dbReference type="STRING" id="525146.Ddes_0665"/>
<dbReference type="KEGG" id="dds:Ddes_0665"/>
<dbReference type="eggNOG" id="COG0091">
    <property type="taxonomic scope" value="Bacteria"/>
</dbReference>
<dbReference type="HOGENOM" id="CLU_083987_3_3_7"/>
<dbReference type="GO" id="GO:0022625">
    <property type="term" value="C:cytosolic large ribosomal subunit"/>
    <property type="evidence" value="ECO:0007669"/>
    <property type="project" value="TreeGrafter"/>
</dbReference>
<dbReference type="GO" id="GO:0019843">
    <property type="term" value="F:rRNA binding"/>
    <property type="evidence" value="ECO:0007669"/>
    <property type="project" value="UniProtKB-UniRule"/>
</dbReference>
<dbReference type="GO" id="GO:0003735">
    <property type="term" value="F:structural constituent of ribosome"/>
    <property type="evidence" value="ECO:0007669"/>
    <property type="project" value="InterPro"/>
</dbReference>
<dbReference type="GO" id="GO:0006412">
    <property type="term" value="P:translation"/>
    <property type="evidence" value="ECO:0007669"/>
    <property type="project" value="UniProtKB-UniRule"/>
</dbReference>
<dbReference type="CDD" id="cd00336">
    <property type="entry name" value="Ribosomal_L22"/>
    <property type="match status" value="1"/>
</dbReference>
<dbReference type="Gene3D" id="3.90.470.10">
    <property type="entry name" value="Ribosomal protein L22/L17"/>
    <property type="match status" value="1"/>
</dbReference>
<dbReference type="HAMAP" id="MF_01331_B">
    <property type="entry name" value="Ribosomal_uL22_B"/>
    <property type="match status" value="1"/>
</dbReference>
<dbReference type="InterPro" id="IPR001063">
    <property type="entry name" value="Ribosomal_uL22"/>
</dbReference>
<dbReference type="InterPro" id="IPR005727">
    <property type="entry name" value="Ribosomal_uL22_bac/chlpt-type"/>
</dbReference>
<dbReference type="InterPro" id="IPR047867">
    <property type="entry name" value="Ribosomal_uL22_bac/org-type"/>
</dbReference>
<dbReference type="InterPro" id="IPR018260">
    <property type="entry name" value="Ribosomal_uL22_CS"/>
</dbReference>
<dbReference type="InterPro" id="IPR036394">
    <property type="entry name" value="Ribosomal_uL22_sf"/>
</dbReference>
<dbReference type="NCBIfam" id="TIGR01044">
    <property type="entry name" value="rplV_bact"/>
    <property type="match status" value="1"/>
</dbReference>
<dbReference type="PANTHER" id="PTHR13501">
    <property type="entry name" value="CHLOROPLAST 50S RIBOSOMAL PROTEIN L22-RELATED"/>
    <property type="match status" value="1"/>
</dbReference>
<dbReference type="PANTHER" id="PTHR13501:SF8">
    <property type="entry name" value="LARGE RIBOSOMAL SUBUNIT PROTEIN UL22M"/>
    <property type="match status" value="1"/>
</dbReference>
<dbReference type="Pfam" id="PF00237">
    <property type="entry name" value="Ribosomal_L22"/>
    <property type="match status" value="1"/>
</dbReference>
<dbReference type="SUPFAM" id="SSF54843">
    <property type="entry name" value="Ribosomal protein L22"/>
    <property type="match status" value="1"/>
</dbReference>
<dbReference type="PROSITE" id="PS00464">
    <property type="entry name" value="RIBOSOMAL_L22"/>
    <property type="match status" value="1"/>
</dbReference>
<name>RL22_DESDA</name>
<gene>
    <name evidence="1" type="primary">rplV</name>
    <name type="ordered locus">Ddes_0665</name>
</gene>
<proteinExistence type="inferred from homology"/>
<sequence length="112" mass="12214">MESKAIAKFQRVSPRKTRLVAKNVQGLGVEEAMNLLRFTPNKPAGVLYGVLKSALANASQLGGVDVDAMVVKEVVVNEGPTWKRFMPRAQGRATKINKRTSHITVILAEGQE</sequence>
<evidence type="ECO:0000255" key="1">
    <source>
        <dbReference type="HAMAP-Rule" id="MF_01331"/>
    </source>
</evidence>
<evidence type="ECO:0000305" key="2"/>
<keyword id="KW-0687">Ribonucleoprotein</keyword>
<keyword id="KW-0689">Ribosomal protein</keyword>
<keyword id="KW-0694">RNA-binding</keyword>
<keyword id="KW-0699">rRNA-binding</keyword>
<feature type="chain" id="PRO_1000166057" description="Large ribosomal subunit protein uL22">
    <location>
        <begin position="1"/>
        <end position="112"/>
    </location>
</feature>
<comment type="function">
    <text evidence="1">This protein binds specifically to 23S rRNA; its binding is stimulated by other ribosomal proteins, e.g. L4, L17, and L20. It is important during the early stages of 50S assembly. It makes multiple contacts with different domains of the 23S rRNA in the assembled 50S subunit and ribosome (By similarity).</text>
</comment>
<comment type="function">
    <text evidence="1">The globular domain of the protein is located near the polypeptide exit tunnel on the outside of the subunit, while an extended beta-hairpin is found that lines the wall of the exit tunnel in the center of the 70S ribosome.</text>
</comment>
<comment type="subunit">
    <text evidence="1">Part of the 50S ribosomal subunit.</text>
</comment>
<comment type="similarity">
    <text evidence="1">Belongs to the universal ribosomal protein uL22 family.</text>
</comment>
<organism>
    <name type="scientific">Desulfovibrio desulfuricans (strain ATCC 27774 / DSM 6949 / MB)</name>
    <dbReference type="NCBI Taxonomy" id="525146"/>
    <lineage>
        <taxon>Bacteria</taxon>
        <taxon>Pseudomonadati</taxon>
        <taxon>Thermodesulfobacteriota</taxon>
        <taxon>Desulfovibrionia</taxon>
        <taxon>Desulfovibrionales</taxon>
        <taxon>Desulfovibrionaceae</taxon>
        <taxon>Desulfovibrio</taxon>
    </lineage>
</organism>